<organism>
    <name type="scientific">Legionella pneumophila (strain Corby)</name>
    <dbReference type="NCBI Taxonomy" id="400673"/>
    <lineage>
        <taxon>Bacteria</taxon>
        <taxon>Pseudomonadati</taxon>
        <taxon>Pseudomonadota</taxon>
        <taxon>Gammaproteobacteria</taxon>
        <taxon>Legionellales</taxon>
        <taxon>Legionellaceae</taxon>
        <taxon>Legionella</taxon>
    </lineage>
</organism>
<keyword id="KW-0975">Bacterial flagellum</keyword>
<keyword id="KW-0998">Cell outer membrane</keyword>
<keyword id="KW-0449">Lipoprotein</keyword>
<keyword id="KW-0472">Membrane</keyword>
<keyword id="KW-0564">Palmitate</keyword>
<keyword id="KW-0732">Signal</keyword>
<proteinExistence type="inferred from homology"/>
<sequence length="230" mass="25143">MNRLNIAVSCLATALLFGCEALHPPAPGDNPDYAPTYPVTPDPKELRKVSGAIYSSETALPLFETPRARHPGDILTVYLIEKTDAQKNATTTQRKNDTTKITNKLFLGRPISLGSGYSMDFDLDNQRQFNGEGRSIQNNKLAGSISVTVAKVLANGNMVVQGEKWVRINQGNEFVRLSGIVRPQDIKADNTITSDRIANARISYGGTGQINNTNAQGWLSRILWGPLFPT</sequence>
<name>FLGH_LEGPC</name>
<protein>
    <recommendedName>
        <fullName evidence="1">Flagellar L-ring protein</fullName>
    </recommendedName>
    <alternativeName>
        <fullName evidence="1">Basal body L-ring protein</fullName>
    </alternativeName>
</protein>
<evidence type="ECO:0000255" key="1">
    <source>
        <dbReference type="HAMAP-Rule" id="MF_00415"/>
    </source>
</evidence>
<accession>A5IBC0</accession>
<feature type="signal peptide" evidence="1">
    <location>
        <begin position="1"/>
        <end position="18"/>
    </location>
</feature>
<feature type="chain" id="PRO_1000050090" description="Flagellar L-ring protein">
    <location>
        <begin position="19"/>
        <end position="230"/>
    </location>
</feature>
<feature type="lipid moiety-binding region" description="N-palmitoyl cysteine" evidence="1">
    <location>
        <position position="19"/>
    </location>
</feature>
<feature type="lipid moiety-binding region" description="S-diacylglycerol cysteine" evidence="1">
    <location>
        <position position="19"/>
    </location>
</feature>
<dbReference type="EMBL" id="CP000675">
    <property type="protein sequence ID" value="ABQ54670.1"/>
    <property type="molecule type" value="Genomic_DNA"/>
</dbReference>
<dbReference type="RefSeq" id="WP_010946954.1">
    <property type="nucleotide sequence ID" value="NZ_JAPMSS010000002.1"/>
</dbReference>
<dbReference type="SMR" id="A5IBC0"/>
<dbReference type="GeneID" id="57035213"/>
<dbReference type="KEGG" id="lpc:LPC_0691"/>
<dbReference type="HOGENOM" id="CLU_069313_0_2_6"/>
<dbReference type="GO" id="GO:0009427">
    <property type="term" value="C:bacterial-type flagellum basal body, distal rod, L ring"/>
    <property type="evidence" value="ECO:0007669"/>
    <property type="project" value="InterPro"/>
</dbReference>
<dbReference type="GO" id="GO:0009279">
    <property type="term" value="C:cell outer membrane"/>
    <property type="evidence" value="ECO:0007669"/>
    <property type="project" value="UniProtKB-SubCell"/>
</dbReference>
<dbReference type="GO" id="GO:0003774">
    <property type="term" value="F:cytoskeletal motor activity"/>
    <property type="evidence" value="ECO:0007669"/>
    <property type="project" value="InterPro"/>
</dbReference>
<dbReference type="GO" id="GO:0071973">
    <property type="term" value="P:bacterial-type flagellum-dependent cell motility"/>
    <property type="evidence" value="ECO:0007669"/>
    <property type="project" value="InterPro"/>
</dbReference>
<dbReference type="HAMAP" id="MF_00415">
    <property type="entry name" value="FlgH"/>
    <property type="match status" value="1"/>
</dbReference>
<dbReference type="InterPro" id="IPR000527">
    <property type="entry name" value="Flag_Lring"/>
</dbReference>
<dbReference type="NCBIfam" id="NF001304">
    <property type="entry name" value="PRK00249.1-4"/>
    <property type="match status" value="1"/>
</dbReference>
<dbReference type="NCBIfam" id="NF009341">
    <property type="entry name" value="PRK12701.1"/>
    <property type="match status" value="1"/>
</dbReference>
<dbReference type="PANTHER" id="PTHR34933">
    <property type="entry name" value="FLAGELLAR L-RING PROTEIN"/>
    <property type="match status" value="1"/>
</dbReference>
<dbReference type="PANTHER" id="PTHR34933:SF1">
    <property type="entry name" value="FLAGELLAR L-RING PROTEIN"/>
    <property type="match status" value="1"/>
</dbReference>
<dbReference type="Pfam" id="PF02107">
    <property type="entry name" value="FlgH"/>
    <property type="match status" value="1"/>
</dbReference>
<dbReference type="PRINTS" id="PR01008">
    <property type="entry name" value="FLGLRINGFLGH"/>
</dbReference>
<dbReference type="PROSITE" id="PS51257">
    <property type="entry name" value="PROKAR_LIPOPROTEIN"/>
    <property type="match status" value="1"/>
</dbReference>
<reference key="1">
    <citation type="submission" date="2006-11" db="EMBL/GenBank/DDBJ databases">
        <title>Identification and characterization of a new conjugation/ type IVA secretion system (trb/tra) of L. pneumophila Corby localized on a mobile genomic island.</title>
        <authorList>
            <person name="Gloeckner G."/>
            <person name="Albert-Weissenberger C."/>
            <person name="Weinmann E."/>
            <person name="Jacobi S."/>
            <person name="Schunder E."/>
            <person name="Steinert M."/>
            <person name="Buchrieser C."/>
            <person name="Hacker J."/>
            <person name="Heuner K."/>
        </authorList>
    </citation>
    <scope>NUCLEOTIDE SEQUENCE [LARGE SCALE GENOMIC DNA]</scope>
    <source>
        <strain>Corby</strain>
    </source>
</reference>
<gene>
    <name evidence="1" type="primary">flgH</name>
    <name type="ordered locus">LPC_0691</name>
</gene>
<comment type="function">
    <text evidence="1">Assembles around the rod to form the L-ring and probably protects the motor/basal body from shearing forces during rotation.</text>
</comment>
<comment type="subunit">
    <text evidence="1">The basal body constitutes a major portion of the flagellar organelle and consists of four rings (L,P,S, and M) mounted on a central rod.</text>
</comment>
<comment type="subcellular location">
    <subcellularLocation>
        <location evidence="1">Cell outer membrane</location>
        <topology evidence="1">Lipid-anchor</topology>
    </subcellularLocation>
    <subcellularLocation>
        <location evidence="1">Bacterial flagellum basal body</location>
    </subcellularLocation>
</comment>
<comment type="similarity">
    <text evidence="1">Belongs to the FlgH family.</text>
</comment>